<gene>
    <name evidence="1" type="primary">iraP</name>
    <name type="ordered locus">EcE24377A_0409</name>
</gene>
<dbReference type="EMBL" id="CP000800">
    <property type="protein sequence ID" value="ABV19474.1"/>
    <property type="molecule type" value="Genomic_DNA"/>
</dbReference>
<dbReference type="RefSeq" id="WP_000792970.1">
    <property type="nucleotide sequence ID" value="NC_009801.1"/>
</dbReference>
<dbReference type="SMR" id="A7ZID1"/>
<dbReference type="GeneID" id="93777080"/>
<dbReference type="KEGG" id="ecw:EcE24377A_0409"/>
<dbReference type="HOGENOM" id="CLU_169517_0_0_6"/>
<dbReference type="Proteomes" id="UP000001122">
    <property type="component" value="Chromosome"/>
</dbReference>
<dbReference type="GO" id="GO:0005737">
    <property type="term" value="C:cytoplasm"/>
    <property type="evidence" value="ECO:0007669"/>
    <property type="project" value="UniProtKB-SubCell"/>
</dbReference>
<dbReference type="GO" id="GO:0009267">
    <property type="term" value="P:cellular response to starvation"/>
    <property type="evidence" value="ECO:0007669"/>
    <property type="project" value="UniProtKB-UniRule"/>
</dbReference>
<dbReference type="HAMAP" id="MF_01198">
    <property type="entry name" value="Anti_adapt_IraP"/>
    <property type="match status" value="1"/>
</dbReference>
<dbReference type="InterPro" id="IPR019732">
    <property type="entry name" value="SigmaS_Anti-adapt_IraP"/>
</dbReference>
<dbReference type="NCBIfam" id="NF007598">
    <property type="entry name" value="PRK10244.1"/>
    <property type="match status" value="1"/>
</dbReference>
<dbReference type="Pfam" id="PF10796">
    <property type="entry name" value="Anti-adapt_IraP"/>
    <property type="match status" value="1"/>
</dbReference>
<name>IRAP_ECO24</name>
<accession>A7ZID1</accession>
<comment type="function">
    <text evidence="1">Inhibits RpoS proteolysis by regulating RssB activity, thereby increasing the stability of the sigma stress factor RpoS especially during phosphate starvation, but also in stationary phase and during nitrogen starvation. Its effect on RpoS stability is due to its interaction with RssB, which probably blocks the interaction of RssB with RpoS, and the consequent delivery of the RssB-RpoS complex to the ClpXP protein degradation pathway.</text>
</comment>
<comment type="subunit">
    <text evidence="1">Interacts with RssB.</text>
</comment>
<comment type="subcellular location">
    <subcellularLocation>
        <location evidence="1">Cytoplasm</location>
    </subcellularLocation>
</comment>
<comment type="similarity">
    <text evidence="1">Belongs to the IraP family.</text>
</comment>
<reference key="1">
    <citation type="journal article" date="2008" name="J. Bacteriol.">
        <title>The pangenome structure of Escherichia coli: comparative genomic analysis of E. coli commensal and pathogenic isolates.</title>
        <authorList>
            <person name="Rasko D.A."/>
            <person name="Rosovitz M.J."/>
            <person name="Myers G.S.A."/>
            <person name="Mongodin E.F."/>
            <person name="Fricke W.F."/>
            <person name="Gajer P."/>
            <person name="Crabtree J."/>
            <person name="Sebaihia M."/>
            <person name="Thomson N.R."/>
            <person name="Chaudhuri R."/>
            <person name="Henderson I.R."/>
            <person name="Sperandio V."/>
            <person name="Ravel J."/>
        </authorList>
    </citation>
    <scope>NUCLEOTIDE SEQUENCE [LARGE SCALE GENOMIC DNA]</scope>
    <source>
        <strain>E24377A / ETEC</strain>
    </source>
</reference>
<proteinExistence type="inferred from homology"/>
<keyword id="KW-0175">Coiled coil</keyword>
<keyword id="KW-0963">Cytoplasm</keyword>
<keyword id="KW-1185">Reference proteome</keyword>
<keyword id="KW-0346">Stress response</keyword>
<sequence>MKNLIAELLFKLAQKEEESKELCAQVEALEIIVTAMLRNMAQNDQQRLIDQVEGALYEVKPDASIPDDDTELLRDYVKKLLKHPRQ</sequence>
<organism>
    <name type="scientific">Escherichia coli O139:H28 (strain E24377A / ETEC)</name>
    <dbReference type="NCBI Taxonomy" id="331111"/>
    <lineage>
        <taxon>Bacteria</taxon>
        <taxon>Pseudomonadati</taxon>
        <taxon>Pseudomonadota</taxon>
        <taxon>Gammaproteobacteria</taxon>
        <taxon>Enterobacterales</taxon>
        <taxon>Enterobacteriaceae</taxon>
        <taxon>Escherichia</taxon>
    </lineage>
</organism>
<protein>
    <recommendedName>
        <fullName evidence="1">Anti-adapter protein IraP</fullName>
    </recommendedName>
</protein>
<feature type="chain" id="PRO_0000337852" description="Anti-adapter protein IraP">
    <location>
        <begin position="1"/>
        <end position="86"/>
    </location>
</feature>
<feature type="coiled-coil region" evidence="1">
    <location>
        <begin position="1"/>
        <end position="36"/>
    </location>
</feature>
<evidence type="ECO:0000255" key="1">
    <source>
        <dbReference type="HAMAP-Rule" id="MF_01198"/>
    </source>
</evidence>